<accession>Q8N135</accession>
<accession>B2RN53</accession>
<accession>B9EGS7</accession>
<accession>Q5M8T1</accession>
<feature type="signal peptide" evidence="3">
    <location>
        <begin position="1"/>
        <end position="19"/>
    </location>
</feature>
<feature type="chain" id="PRO_0000017712" description="Leucine-rich repeat LGI family member 4">
    <location>
        <begin position="20"/>
        <end position="537"/>
    </location>
</feature>
<feature type="repeat" description="LRR 1">
    <location>
        <begin position="53"/>
        <end position="74"/>
    </location>
</feature>
<feature type="repeat" description="LRR 2">
    <location>
        <begin position="77"/>
        <end position="98"/>
    </location>
</feature>
<feature type="repeat" description="LRR 3">
    <location>
        <begin position="101"/>
        <end position="122"/>
    </location>
</feature>
<feature type="repeat" description="LRR 4">
    <location>
        <begin position="125"/>
        <end position="146"/>
    </location>
</feature>
<feature type="domain" description="LRRCT">
    <location>
        <begin position="158"/>
        <end position="208"/>
    </location>
</feature>
<feature type="repeat" description="EAR 1" evidence="4">
    <location>
        <begin position="210"/>
        <end position="252"/>
    </location>
</feature>
<feature type="repeat" description="EAR 2" evidence="4">
    <location>
        <begin position="256"/>
        <end position="298"/>
    </location>
</feature>
<feature type="repeat" description="EAR 3" evidence="4">
    <location>
        <begin position="302"/>
        <end position="349"/>
    </location>
</feature>
<feature type="repeat" description="EAR 4" evidence="4">
    <location>
        <begin position="351"/>
        <end position="394"/>
    </location>
</feature>
<feature type="repeat" description="EAR 5" evidence="4">
    <location>
        <begin position="396"/>
        <end position="439"/>
    </location>
</feature>
<feature type="repeat" description="EAR 6" evidence="4">
    <location>
        <begin position="441"/>
        <end position="483"/>
    </location>
</feature>
<feature type="repeat" description="EAR 7" evidence="4">
    <location>
        <begin position="487"/>
        <end position="532"/>
    </location>
</feature>
<feature type="glycosylation site" description="N-linked (GlcNAc...) asparagine" evidence="3">
    <location>
        <position position="177"/>
    </location>
</feature>
<feature type="splice variant" id="VSP_009230" description="In isoform 2." evidence="7 8">
    <original>ELSWFQTVGESALSVEPFSYQGEPHIVLAQPFAGRCLILSWDYSLQRFRPEE</original>
    <variation>GGGLSRWGGRREIWGKGCQGQEARLTPCPAISRSGKTLSKQHCLPEPQFSHL</variation>
    <location>
        <begin position="210"/>
        <end position="261"/>
    </location>
</feature>
<feature type="splice variant" id="VSP_009231" description="In isoform 2." evidence="7 8">
    <location>
        <begin position="262"/>
        <end position="537"/>
    </location>
</feature>
<feature type="sequence variant" id="VAR_080055" description="In AMC1; dbSNP:rs755500591." evidence="6">
    <original>R</original>
    <variation>P</variation>
    <location>
        <position position="258"/>
    </location>
</feature>
<feature type="sequence variant" id="VAR_080056" description="In AMC1." evidence="6">
    <location>
        <begin position="288"/>
        <end position="537"/>
    </location>
</feature>
<feature type="sequence variant" id="VAR_080057" description="In AMC1; dbSNP:rs1064797094." evidence="6">
    <original>V</original>
    <variation>D</variation>
    <location>
        <position position="434"/>
    </location>
</feature>
<comment type="function">
    <text evidence="2">Component of Schwann cell signaling pathway(s) that controls axon segregation and myelin formation (By similarity).</text>
</comment>
<comment type="subunit">
    <text evidence="1">Can bind to ADAM11, ADAM22 and ADAM23.</text>
</comment>
<comment type="subcellular location">
    <subcellularLocation>
        <location evidence="9">Secreted</location>
    </subcellularLocation>
</comment>
<comment type="alternative products">
    <event type="alternative splicing"/>
    <isoform>
        <id>Q8N135-1</id>
        <name>1</name>
        <sequence type="displayed"/>
    </isoform>
    <isoform>
        <id>Q8N135-2</id>
        <name>2</name>
        <sequence type="described" ref="VSP_009230 VSP_009231"/>
    </isoform>
</comment>
<comment type="tissue specificity">
    <text evidence="5">Widely expressed, with highest expression in brain.</text>
</comment>
<comment type="disease" evidence="6">
    <disease id="DI-04998">
        <name>Arthrogryposis multiplex congenita 1, neurogenic, with myelin defect</name>
        <acronym>AMC1</acronym>
        <description>A form of arthrogryposis multiplex congenita, a developmental condition characterized by multiple joint contractures resulting from reduced or absent fetal movements. AMC1 is an autosomal recessive severe form with onset in utero. Most affected individuals die in utero. Those who survive have generalized contractures and hypotonia. The disorder is caused by a neurogenic defect and poor or absent myelin formation around peripheral nerves rather than by a muscular defect.</description>
        <dbReference type="MIM" id="617468"/>
    </disease>
    <text>The disease is caused by variants affecting the gene represented in this entry.</text>
</comment>
<organism>
    <name type="scientific">Homo sapiens</name>
    <name type="common">Human</name>
    <dbReference type="NCBI Taxonomy" id="9606"/>
    <lineage>
        <taxon>Eukaryota</taxon>
        <taxon>Metazoa</taxon>
        <taxon>Chordata</taxon>
        <taxon>Craniata</taxon>
        <taxon>Vertebrata</taxon>
        <taxon>Euteleostomi</taxon>
        <taxon>Mammalia</taxon>
        <taxon>Eutheria</taxon>
        <taxon>Euarchontoglires</taxon>
        <taxon>Primates</taxon>
        <taxon>Haplorrhini</taxon>
        <taxon>Catarrhini</taxon>
        <taxon>Hominidae</taxon>
        <taxon>Homo</taxon>
    </lineage>
</organism>
<proteinExistence type="evidence at protein level"/>
<protein>
    <recommendedName>
        <fullName>Leucine-rich repeat LGI family member 4</fullName>
    </recommendedName>
    <alternativeName>
        <fullName>LGI1-like protein 3</fullName>
    </alternativeName>
    <alternativeName>
        <fullName>Leucine-rich glioma-inactivated protein 4</fullName>
    </alternativeName>
</protein>
<gene>
    <name type="primary">LGI4</name>
    <name type="synonym">LGIL3</name>
    <name type="ORF">UNQ6515/PRO21485</name>
</gene>
<keyword id="KW-0025">Alternative splicing</keyword>
<keyword id="KW-0225">Disease variant</keyword>
<keyword id="KW-0325">Glycoprotein</keyword>
<keyword id="KW-0433">Leucine-rich repeat</keyword>
<keyword id="KW-1267">Proteomics identification</keyword>
<keyword id="KW-1185">Reference proteome</keyword>
<keyword id="KW-0677">Repeat</keyword>
<keyword id="KW-0964">Secreted</keyword>
<keyword id="KW-0732">Signal</keyword>
<name>LGI4_HUMAN</name>
<sequence>MGGAGILLLLLAGAGVVVAWRPPKGKCPLRCSCSKDSALCEGSPDLPVSFSPTLLSLSLVRTGVTQLKAGSFLRIPSLHLLLFTSNSFSVIEDDAFAGLSHLQYLFIEDNEIGSISKNALRGLRSLTHLSLANNHLETLPRFLFRGLDTLTHVDLRGNPFQCDCRVLWLLQWMPTVNASVGTGACAGPASLSHMQLHHLDPKTFKCRAIELSWFQTVGESALSVEPFSYQGEPHIVLAQPFAGRCLILSWDYSLQRFRPEEELPAASVVSCKPLVLGPSLFVLAARLWGGSQLWARPSPGLRLAPTQTLAPRRLLRPNDAELLWLEGQPCFVVADASKAGSTTLLCRDGPGFYPHQSLHAWHRDTDAEALELDGRPHLLLASASQRPVLFHWTGGRFERRTDIPEAEDVYATRHFQAGGDVFLCLTRYIGDSMVMRWDGSMFRLLQQLPSRGAHVFQPLLIARDQLAILGSDFAFSQVLRLEPDKGLLEPLQELGPPALVAPRAFAHITMAGRRFLFAACFKGPTQIYQHHEIDLSA</sequence>
<evidence type="ECO:0000250" key="1"/>
<evidence type="ECO:0000250" key="2">
    <source>
        <dbReference type="UniProtKB" id="Q8K1S1"/>
    </source>
</evidence>
<evidence type="ECO:0000255" key="3"/>
<evidence type="ECO:0000255" key="4">
    <source>
        <dbReference type="PROSITE-ProRule" id="PRU00075"/>
    </source>
</evidence>
<evidence type="ECO:0000269" key="5">
    <source>
    </source>
</evidence>
<evidence type="ECO:0000269" key="6">
    <source>
    </source>
</evidence>
<evidence type="ECO:0000303" key="7">
    <source>
    </source>
</evidence>
<evidence type="ECO:0000303" key="8">
    <source>
    </source>
</evidence>
<evidence type="ECO:0000305" key="9"/>
<dbReference type="EMBL" id="AF467954">
    <property type="protein sequence ID" value="AAM49552.1"/>
    <property type="molecule type" value="mRNA"/>
</dbReference>
<dbReference type="EMBL" id="AJ487959">
    <property type="protein sequence ID" value="CAD32306.1"/>
    <property type="molecule type" value="mRNA"/>
</dbReference>
<dbReference type="EMBL" id="AJ487519">
    <property type="protein sequence ID" value="CAD31787.1"/>
    <property type="molecule type" value="mRNA"/>
</dbReference>
<dbReference type="EMBL" id="AY358121">
    <property type="protein sequence ID" value="AAQ88488.1"/>
    <property type="molecule type" value="mRNA"/>
</dbReference>
<dbReference type="EMBL" id="BC087848">
    <property type="protein sequence ID" value="AAH87848.1"/>
    <property type="molecule type" value="mRNA"/>
</dbReference>
<dbReference type="EMBL" id="BC136694">
    <property type="protein sequence ID" value="AAI36695.1"/>
    <property type="molecule type" value="mRNA"/>
</dbReference>
<dbReference type="EMBL" id="BC136697">
    <property type="protein sequence ID" value="AAI36698.1"/>
    <property type="molecule type" value="mRNA"/>
</dbReference>
<dbReference type="CCDS" id="CCDS12444.1">
    <molecule id="Q8N135-1"/>
</dbReference>
<dbReference type="RefSeq" id="NP_644813.1">
    <molecule id="Q8N135-1"/>
    <property type="nucleotide sequence ID" value="NM_139284.3"/>
</dbReference>
<dbReference type="SMR" id="Q8N135"/>
<dbReference type="BioGRID" id="127855">
    <property type="interactions" value="1"/>
</dbReference>
<dbReference type="FunCoup" id="Q8N135">
    <property type="interactions" value="200"/>
</dbReference>
<dbReference type="STRING" id="9606.ENSP00000312273"/>
<dbReference type="GlyCosmos" id="Q8N135">
    <property type="glycosylation" value="2 sites, 2 glycans"/>
</dbReference>
<dbReference type="GlyGen" id="Q8N135">
    <property type="glycosylation" value="2 sites, 2 O-linked glycans (1 site)"/>
</dbReference>
<dbReference type="iPTMnet" id="Q8N135"/>
<dbReference type="PhosphoSitePlus" id="Q8N135"/>
<dbReference type="BioMuta" id="LGI4"/>
<dbReference type="DMDM" id="32469741"/>
<dbReference type="jPOST" id="Q8N135"/>
<dbReference type="MassIVE" id="Q8N135"/>
<dbReference type="PaxDb" id="9606-ENSP00000312273"/>
<dbReference type="PeptideAtlas" id="Q8N135"/>
<dbReference type="ProteomicsDB" id="71534">
    <molecule id="Q8N135-1"/>
</dbReference>
<dbReference type="ProteomicsDB" id="71535">
    <molecule id="Q8N135-2"/>
</dbReference>
<dbReference type="Antibodypedia" id="29282">
    <property type="antibodies" value="160 antibodies from 26 providers"/>
</dbReference>
<dbReference type="DNASU" id="163175"/>
<dbReference type="Ensembl" id="ENST00000310123.8">
    <molecule id="Q8N135-1"/>
    <property type="protein sequence ID" value="ENSP00000312273.3"/>
    <property type="gene ID" value="ENSG00000153902.14"/>
</dbReference>
<dbReference type="Ensembl" id="ENST00000591633.2">
    <molecule id="Q8N135-2"/>
    <property type="protein sequence ID" value="ENSP00000467784.1"/>
    <property type="gene ID" value="ENSG00000153902.14"/>
</dbReference>
<dbReference type="GeneID" id="163175"/>
<dbReference type="KEGG" id="hsa:163175"/>
<dbReference type="MANE-Select" id="ENST00000310123.8">
    <property type="protein sequence ID" value="ENSP00000312273.3"/>
    <property type="RefSeq nucleotide sequence ID" value="NM_139284.3"/>
    <property type="RefSeq protein sequence ID" value="NP_644813.1"/>
</dbReference>
<dbReference type="UCSC" id="uc002nxx.3">
    <molecule id="Q8N135-1"/>
    <property type="organism name" value="human"/>
</dbReference>
<dbReference type="AGR" id="HGNC:18712"/>
<dbReference type="CTD" id="163175"/>
<dbReference type="DisGeNET" id="163175"/>
<dbReference type="GeneCards" id="LGI4"/>
<dbReference type="HGNC" id="HGNC:18712">
    <property type="gene designation" value="LGI4"/>
</dbReference>
<dbReference type="HPA" id="ENSG00000153902">
    <property type="expression patterns" value="Low tissue specificity"/>
</dbReference>
<dbReference type="MalaCards" id="LGI4"/>
<dbReference type="MIM" id="608303">
    <property type="type" value="gene"/>
</dbReference>
<dbReference type="MIM" id="617468">
    <property type="type" value="phenotype"/>
</dbReference>
<dbReference type="neXtProt" id="NX_Q8N135"/>
<dbReference type="OpenTargets" id="ENSG00000153902"/>
<dbReference type="Orphanet" id="2680">
    <property type="disease" value="Hypomyelination neuropathy-arthrogryposis syndrome"/>
</dbReference>
<dbReference type="PharmGKB" id="PA38656"/>
<dbReference type="VEuPathDB" id="HostDB:ENSG00000153902"/>
<dbReference type="eggNOG" id="ENOG502SHYJ">
    <property type="taxonomic scope" value="Eukaryota"/>
</dbReference>
<dbReference type="GeneTree" id="ENSGT00940000162018"/>
<dbReference type="HOGENOM" id="CLU_036403_0_0_1"/>
<dbReference type="InParanoid" id="Q8N135"/>
<dbReference type="OMA" id="WLLQWMA"/>
<dbReference type="OrthoDB" id="546383at2759"/>
<dbReference type="PAN-GO" id="Q8N135">
    <property type="GO annotations" value="3 GO annotations based on evolutionary models"/>
</dbReference>
<dbReference type="PhylomeDB" id="Q8N135"/>
<dbReference type="TreeFam" id="TF333155"/>
<dbReference type="PathwayCommons" id="Q8N135"/>
<dbReference type="Reactome" id="R-HSA-5682910">
    <property type="pathway name" value="LGI-ADAM interactions"/>
</dbReference>
<dbReference type="BioGRID-ORCS" id="163175">
    <property type="hits" value="12 hits in 1140 CRISPR screens"/>
</dbReference>
<dbReference type="ChiTaRS" id="LGI4">
    <property type="organism name" value="human"/>
</dbReference>
<dbReference type="GenomeRNAi" id="163175"/>
<dbReference type="Pharos" id="Q8N135">
    <property type="development level" value="Tbio"/>
</dbReference>
<dbReference type="PRO" id="PR:Q8N135"/>
<dbReference type="Proteomes" id="UP000005640">
    <property type="component" value="Chromosome 19"/>
</dbReference>
<dbReference type="RNAct" id="Q8N135">
    <property type="molecule type" value="protein"/>
</dbReference>
<dbReference type="Bgee" id="ENSG00000153902">
    <property type="expression patterns" value="Expressed in tibial nerve and 149 other cell types or tissues"/>
</dbReference>
<dbReference type="ExpressionAtlas" id="Q8N135">
    <property type="expression patterns" value="baseline and differential"/>
</dbReference>
<dbReference type="GO" id="GO:0005576">
    <property type="term" value="C:extracellular region"/>
    <property type="evidence" value="ECO:0000304"/>
    <property type="project" value="Reactome"/>
</dbReference>
<dbReference type="GO" id="GO:0005615">
    <property type="term" value="C:extracellular space"/>
    <property type="evidence" value="ECO:0000318"/>
    <property type="project" value="GO_Central"/>
</dbReference>
<dbReference type="GO" id="GO:0008344">
    <property type="term" value="P:adult locomotory behavior"/>
    <property type="evidence" value="ECO:0007669"/>
    <property type="project" value="Ensembl"/>
</dbReference>
<dbReference type="GO" id="GO:0014009">
    <property type="term" value="P:glial cell proliferation"/>
    <property type="evidence" value="ECO:0007669"/>
    <property type="project" value="Ensembl"/>
</dbReference>
<dbReference type="GO" id="GO:0022011">
    <property type="term" value="P:myelination in peripheral nervous system"/>
    <property type="evidence" value="ECO:0000318"/>
    <property type="project" value="GO_Central"/>
</dbReference>
<dbReference type="GO" id="GO:0042551">
    <property type="term" value="P:neuron maturation"/>
    <property type="evidence" value="ECO:0000318"/>
    <property type="project" value="GO_Central"/>
</dbReference>
<dbReference type="GO" id="GO:0031641">
    <property type="term" value="P:regulation of myelination"/>
    <property type="evidence" value="ECO:0000315"/>
    <property type="project" value="UniProtKB"/>
</dbReference>
<dbReference type="FunFam" id="3.80.10.10:FF:000017">
    <property type="entry name" value="leucine-rich repeat LGI family member 3"/>
    <property type="match status" value="1"/>
</dbReference>
<dbReference type="Gene3D" id="3.80.10.10">
    <property type="entry name" value="Ribonuclease Inhibitor"/>
    <property type="match status" value="1"/>
</dbReference>
<dbReference type="InterPro" id="IPR000483">
    <property type="entry name" value="Cys-rich_flank_reg_C"/>
</dbReference>
<dbReference type="InterPro" id="IPR009039">
    <property type="entry name" value="EAR"/>
</dbReference>
<dbReference type="InterPro" id="IPR005492">
    <property type="entry name" value="EPTP"/>
</dbReference>
<dbReference type="InterPro" id="IPR001611">
    <property type="entry name" value="Leu-rich_rpt"/>
</dbReference>
<dbReference type="InterPro" id="IPR003591">
    <property type="entry name" value="Leu-rich_rpt_typical-subtyp"/>
</dbReference>
<dbReference type="InterPro" id="IPR051295">
    <property type="entry name" value="LGI_related"/>
</dbReference>
<dbReference type="InterPro" id="IPR032675">
    <property type="entry name" value="LRR_dom_sf"/>
</dbReference>
<dbReference type="PANTHER" id="PTHR24367:SF268">
    <property type="entry name" value="LEUCINE-RICH REPEAT LGI FAMILY MEMBER 4"/>
    <property type="match status" value="1"/>
</dbReference>
<dbReference type="PANTHER" id="PTHR24367">
    <property type="entry name" value="LEUCINE-RICH REPEAT-CONTAINING PROTEIN"/>
    <property type="match status" value="1"/>
</dbReference>
<dbReference type="Pfam" id="PF03736">
    <property type="entry name" value="EPTP"/>
    <property type="match status" value="3"/>
</dbReference>
<dbReference type="Pfam" id="PF13855">
    <property type="entry name" value="LRR_8"/>
    <property type="match status" value="1"/>
</dbReference>
<dbReference type="SMART" id="SM00369">
    <property type="entry name" value="LRR_TYP"/>
    <property type="match status" value="3"/>
</dbReference>
<dbReference type="SMART" id="SM00082">
    <property type="entry name" value="LRRCT"/>
    <property type="match status" value="1"/>
</dbReference>
<dbReference type="SUPFAM" id="SSF52058">
    <property type="entry name" value="L domain-like"/>
    <property type="match status" value="1"/>
</dbReference>
<dbReference type="PROSITE" id="PS50912">
    <property type="entry name" value="EAR"/>
    <property type="match status" value="7"/>
</dbReference>
<dbReference type="PROSITE" id="PS51450">
    <property type="entry name" value="LRR"/>
    <property type="match status" value="3"/>
</dbReference>
<reference key="1">
    <citation type="journal article" date="2002" name="FEBS Lett.">
        <title>The LGI1 gene involved in lateral temporal lobe epilepsy belongs to a new subfamily of leucine-rich repeat proteins.</title>
        <authorList>
            <person name="Gu W."/>
            <person name="Wevers A."/>
            <person name="Schroder H."/>
            <person name="Grzeschik K.H."/>
            <person name="Derst C."/>
            <person name="Brodtkorb E."/>
            <person name="de Vos R."/>
            <person name="Steinlein O.K."/>
        </authorList>
    </citation>
    <scope>NUCLEOTIDE SEQUENCE [MRNA] (ISOFORM 1)</scope>
    <scope>TISSUE SPECIFICITY</scope>
</reference>
<reference key="2">
    <citation type="journal article" date="2002" name="Hum. Mol. Genet.">
        <title>A common protein interaction domain links two recently identified epilepsy genes.</title>
        <authorList>
            <person name="Scheel H."/>
            <person name="Tomiuk S."/>
            <person name="Hofmann K."/>
        </authorList>
    </citation>
    <scope>NUCLEOTIDE SEQUENCE [MRNA] (ISOFORM 1)</scope>
</reference>
<reference key="3">
    <citation type="journal article" date="2002" name="Trends Biochem. Sci.">
        <title>The novel EPTP repeat defines a superfamily of proteins implicated in epileptic disorders.</title>
        <authorList>
            <person name="Staub E."/>
            <person name="Perez-Tur J."/>
            <person name="Siebert R."/>
            <person name="Nobile C."/>
            <person name="Moschonas N.K."/>
            <person name="Deloukas P."/>
            <person name="Hinzmann B."/>
        </authorList>
    </citation>
    <scope>NUCLEOTIDE SEQUENCE [MRNA] (ISOFORM 1)</scope>
</reference>
<reference key="4">
    <citation type="journal article" date="2003" name="Genome Res.">
        <title>The secreted protein discovery initiative (SPDI), a large-scale effort to identify novel human secreted and transmembrane proteins: a bioinformatics assessment.</title>
        <authorList>
            <person name="Clark H.F."/>
            <person name="Gurney A.L."/>
            <person name="Abaya E."/>
            <person name="Baker K."/>
            <person name="Baldwin D.T."/>
            <person name="Brush J."/>
            <person name="Chen J."/>
            <person name="Chow B."/>
            <person name="Chui C."/>
            <person name="Crowley C."/>
            <person name="Currell B."/>
            <person name="Deuel B."/>
            <person name="Dowd P."/>
            <person name="Eaton D."/>
            <person name="Foster J.S."/>
            <person name="Grimaldi C."/>
            <person name="Gu Q."/>
            <person name="Hass P.E."/>
            <person name="Heldens S."/>
            <person name="Huang A."/>
            <person name="Kim H.S."/>
            <person name="Klimowski L."/>
            <person name="Jin Y."/>
            <person name="Johnson S."/>
            <person name="Lee J."/>
            <person name="Lewis L."/>
            <person name="Liao D."/>
            <person name="Mark M.R."/>
            <person name="Robbie E."/>
            <person name="Sanchez C."/>
            <person name="Schoenfeld J."/>
            <person name="Seshagiri S."/>
            <person name="Simmons L."/>
            <person name="Singh J."/>
            <person name="Smith V."/>
            <person name="Stinson J."/>
            <person name="Vagts A."/>
            <person name="Vandlen R.L."/>
            <person name="Watanabe C."/>
            <person name="Wieand D."/>
            <person name="Woods K."/>
            <person name="Xie M.-H."/>
            <person name="Yansura D.G."/>
            <person name="Yi S."/>
            <person name="Yu G."/>
            <person name="Yuan J."/>
            <person name="Zhang M."/>
            <person name="Zhang Z."/>
            <person name="Goddard A.D."/>
            <person name="Wood W.I."/>
            <person name="Godowski P.J."/>
            <person name="Gray A.M."/>
        </authorList>
    </citation>
    <scope>NUCLEOTIDE SEQUENCE [LARGE SCALE MRNA] (ISOFORM 2)</scope>
</reference>
<reference key="5">
    <citation type="journal article" date="2004" name="Genome Res.">
        <title>The status, quality, and expansion of the NIH full-length cDNA project: the Mammalian Gene Collection (MGC).</title>
        <authorList>
            <consortium name="The MGC Project Team"/>
        </authorList>
    </citation>
    <scope>NUCLEOTIDE SEQUENCE [LARGE SCALE MRNA] (ISOFORMS 1 AND 2)</scope>
    <source>
        <tissue>Brain</tissue>
        <tissue>Testis</tissue>
    </source>
</reference>
<reference key="6">
    <citation type="journal article" date="2017" name="Am. J. Hum. Genet.">
        <title>Loss-of-function mutations in LGI4, a secreted ligand involved in schwann cell myelination, are responsible for arthrogryposis multiplex congenita.</title>
        <authorList>
            <person name="Xue S."/>
            <person name="Maluenda J."/>
            <person name="Marguet F."/>
            <person name="Shboul M."/>
            <person name="Quevarec L."/>
            <person name="Bonnard C."/>
            <person name="Ng A.Y."/>
            <person name="Tohari S."/>
            <person name="Tan T.T."/>
            <person name="Kong M.K."/>
            <person name="Monaghan K.G."/>
            <person name="Cho M.T."/>
            <person name="Siskind C.E."/>
            <person name="Sampson J.B."/>
            <person name="Rocha C.T."/>
            <person name="Alkazaleh F."/>
            <person name="Gonzales M."/>
            <person name="Rigonnot L."/>
            <person name="Whalen S."/>
            <person name="Gut M."/>
            <person name="Gut I."/>
            <person name="Bucourt M."/>
            <person name="Venkatesh B."/>
            <person name="Laquerriere A."/>
            <person name="Reversade B."/>
            <person name="Melki J."/>
        </authorList>
    </citation>
    <scope>SUBCELLULAR LOCATION</scope>
    <scope>INVOLVEMENT IN AMC1</scope>
    <scope>VARIANTS AMC1 PRO-258; 288-TRP--ALA-537 DEL AND ASP-434</scope>
</reference>